<protein>
    <recommendedName>
        <fullName>U11-theraphotoxin-Hhn1q</fullName>
        <shortName>U11-TRTX-Hhn1q</shortName>
    </recommendedName>
    <alternativeName>
        <fullName>Hainantoxin-XVI-17</fullName>
        <shortName>HNTX-XVI-17</shortName>
    </alternativeName>
</protein>
<sequence>MNTVRVTFLLVFVLAVSLGQADKDENRMEMQEKTEQGKSYLDFAENLLLQKLEELEAKLLEEDSEESRNSRQKRCIGEGVPCDEKDPRCCSGLVCLKPTLHGIWYKSYYCYRK</sequence>
<keyword id="KW-1015">Disulfide bond</keyword>
<keyword id="KW-0872">Ion channel impairing toxin</keyword>
<keyword id="KW-0960">Knottin</keyword>
<keyword id="KW-0964">Secreted</keyword>
<keyword id="KW-0732">Signal</keyword>
<keyword id="KW-0800">Toxin</keyword>
<reference key="1">
    <citation type="journal article" date="2010" name="J. Proteome Res.">
        <title>Molecular diversification of peptide toxins from the tarantula Haplopelma hainanum (Ornithoctonus hainana) venom based on transcriptomic, peptidomic, and genomic analyses.</title>
        <authorList>
            <person name="Tang X."/>
            <person name="Zhang Y."/>
            <person name="Hu W."/>
            <person name="Xu D."/>
            <person name="Tao H."/>
            <person name="Yang X."/>
            <person name="Li Y."/>
            <person name="Jiang L."/>
            <person name="Liang S."/>
        </authorList>
    </citation>
    <scope>NUCLEOTIDE SEQUENCE [LARGE SCALE MRNA]</scope>
    <source>
        <tissue>Venom gland</tissue>
    </source>
</reference>
<dbReference type="EMBL" id="GU292964">
    <property type="protein sequence ID" value="ADB56780.1"/>
    <property type="molecule type" value="mRNA"/>
</dbReference>
<dbReference type="SMR" id="D2Y287"/>
<dbReference type="ArachnoServer" id="AS001863">
    <property type="toxin name" value="U11-theraphotoxin-Hhn1q"/>
</dbReference>
<dbReference type="GO" id="GO:0005576">
    <property type="term" value="C:extracellular region"/>
    <property type="evidence" value="ECO:0007669"/>
    <property type="project" value="UniProtKB-SubCell"/>
</dbReference>
<dbReference type="GO" id="GO:0019871">
    <property type="term" value="F:sodium channel inhibitor activity"/>
    <property type="evidence" value="ECO:0007669"/>
    <property type="project" value="InterPro"/>
</dbReference>
<dbReference type="GO" id="GO:0090729">
    <property type="term" value="F:toxin activity"/>
    <property type="evidence" value="ECO:0007669"/>
    <property type="project" value="UniProtKB-KW"/>
</dbReference>
<dbReference type="InterPro" id="IPR012627">
    <property type="entry name" value="Toxin_22"/>
</dbReference>
<dbReference type="Pfam" id="PF08092">
    <property type="entry name" value="Toxin_22"/>
    <property type="match status" value="1"/>
</dbReference>
<evidence type="ECO:0000250" key="1"/>
<evidence type="ECO:0000255" key="2"/>
<evidence type="ECO:0000256" key="3">
    <source>
        <dbReference type="SAM" id="MobiDB-lite"/>
    </source>
</evidence>
<evidence type="ECO:0000305" key="4"/>
<comment type="function">
    <text evidence="1">Probable ion channel inhibitor.</text>
</comment>
<comment type="subcellular location">
    <subcellularLocation>
        <location evidence="1">Secreted</location>
    </subcellularLocation>
</comment>
<comment type="tissue specificity">
    <text>Expressed by the venom gland.</text>
</comment>
<comment type="domain">
    <text evidence="1">The presence of a 'disulfide through disulfide knot' structurally defines this protein as a knottin.</text>
</comment>
<comment type="similarity">
    <text evidence="4">Belongs to the neurotoxin 14 (magi-1) family. 01 (HNTX-16) subfamily.</text>
</comment>
<accession>D2Y287</accession>
<organism>
    <name type="scientific">Cyriopagopus hainanus</name>
    <name type="common">Chinese bird spider</name>
    <name type="synonym">Haplopelma hainanum</name>
    <dbReference type="NCBI Taxonomy" id="209901"/>
    <lineage>
        <taxon>Eukaryota</taxon>
        <taxon>Metazoa</taxon>
        <taxon>Ecdysozoa</taxon>
        <taxon>Arthropoda</taxon>
        <taxon>Chelicerata</taxon>
        <taxon>Arachnida</taxon>
        <taxon>Araneae</taxon>
        <taxon>Mygalomorphae</taxon>
        <taxon>Theraphosidae</taxon>
        <taxon>Haplopelma</taxon>
    </lineage>
</organism>
<name>H16Q1_CYRHA</name>
<proteinExistence type="evidence at transcript level"/>
<feature type="signal peptide" evidence="2">
    <location>
        <begin position="1"/>
        <end position="21"/>
    </location>
</feature>
<feature type="propeptide" id="PRO_0000400949" evidence="1">
    <location>
        <begin position="22"/>
        <end position="74"/>
    </location>
</feature>
<feature type="peptide" id="PRO_0000400950" description="U11-theraphotoxin-Hhn1q">
    <location>
        <begin position="75"/>
        <end position="113"/>
    </location>
</feature>
<feature type="region of interest" description="Disordered" evidence="3">
    <location>
        <begin position="61"/>
        <end position="82"/>
    </location>
</feature>
<feature type="disulfide bond" evidence="1">
    <location>
        <begin position="75"/>
        <end position="90"/>
    </location>
</feature>
<feature type="disulfide bond" evidence="1">
    <location>
        <begin position="82"/>
        <end position="95"/>
    </location>
</feature>
<feature type="disulfide bond" evidence="1">
    <location>
        <begin position="89"/>
        <end position="110"/>
    </location>
</feature>